<dbReference type="EC" id="2.7.3.9" evidence="3"/>
<dbReference type="EMBL" id="AE006468">
    <property type="protein sequence ID" value="AAL21879.1"/>
    <property type="molecule type" value="Genomic_DNA"/>
</dbReference>
<dbReference type="EMBL" id="L13259">
    <property type="protein sequence ID" value="AAA20895.1"/>
    <property type="molecule type" value="Genomic_DNA"/>
</dbReference>
<dbReference type="PIR" id="B47354">
    <property type="entry name" value="B47354"/>
</dbReference>
<dbReference type="RefSeq" id="NP_461920.1">
    <property type="nucleotide sequence ID" value="NC_003197.2"/>
</dbReference>
<dbReference type="RefSeq" id="WP_000957887.1">
    <property type="nucleotide sequence ID" value="NC_003197.2"/>
</dbReference>
<dbReference type="SMR" id="P37178"/>
<dbReference type="STRING" id="99287.STM3003"/>
<dbReference type="PaxDb" id="99287-STM3003"/>
<dbReference type="GeneID" id="1254526"/>
<dbReference type="KEGG" id="stm:STM3003"/>
<dbReference type="PATRIC" id="fig|99287.12.peg.3178"/>
<dbReference type="HOGENOM" id="CLU_007308_7_1_6"/>
<dbReference type="OMA" id="IYLADHD"/>
<dbReference type="PhylomeDB" id="P37178"/>
<dbReference type="BioCyc" id="SENT99287:STM3003-MONOMER"/>
<dbReference type="Proteomes" id="UP000001014">
    <property type="component" value="Chromosome"/>
</dbReference>
<dbReference type="GO" id="GO:0005737">
    <property type="term" value="C:cytoplasm"/>
    <property type="evidence" value="ECO:0007669"/>
    <property type="project" value="UniProtKB-SubCell"/>
</dbReference>
<dbReference type="GO" id="GO:0016301">
    <property type="term" value="F:kinase activity"/>
    <property type="evidence" value="ECO:0007669"/>
    <property type="project" value="UniProtKB-KW"/>
</dbReference>
<dbReference type="GO" id="GO:0046872">
    <property type="term" value="F:metal ion binding"/>
    <property type="evidence" value="ECO:0007669"/>
    <property type="project" value="UniProtKB-KW"/>
</dbReference>
<dbReference type="GO" id="GO:0008965">
    <property type="term" value="F:phosphoenolpyruvate-protein phosphotransferase activity"/>
    <property type="evidence" value="ECO:0000318"/>
    <property type="project" value="GO_Central"/>
</dbReference>
<dbReference type="GO" id="GO:0015764">
    <property type="term" value="P:N-acetylglucosamine transport"/>
    <property type="evidence" value="ECO:0000318"/>
    <property type="project" value="GO_Central"/>
</dbReference>
<dbReference type="GO" id="GO:0009401">
    <property type="term" value="P:phosphoenolpyruvate-dependent sugar phosphotransferase system"/>
    <property type="evidence" value="ECO:0007669"/>
    <property type="project" value="UniProtKB-KW"/>
</dbReference>
<dbReference type="FunFam" id="1.10.274.10:FF:000002">
    <property type="entry name" value="Phosphoenolpyruvate-protein phosphotransferase PtsP"/>
    <property type="match status" value="1"/>
</dbReference>
<dbReference type="FunFam" id="3.20.20.60:FF:000012">
    <property type="entry name" value="Phosphoenolpyruvate-protein phosphotransferase PtsP"/>
    <property type="match status" value="1"/>
</dbReference>
<dbReference type="FunFam" id="3.30.450.40:FF:000012">
    <property type="entry name" value="Phosphoenolpyruvate-protein phosphotransferase PtsP"/>
    <property type="match status" value="1"/>
</dbReference>
<dbReference type="FunFam" id="3.50.30.10:FF:000003">
    <property type="entry name" value="Phosphoenolpyruvate-protein phosphotransferase ptsP"/>
    <property type="match status" value="1"/>
</dbReference>
<dbReference type="Gene3D" id="3.30.450.40">
    <property type="match status" value="1"/>
</dbReference>
<dbReference type="Gene3D" id="3.20.20.60">
    <property type="entry name" value="Phosphoenolpyruvate-binding domains"/>
    <property type="match status" value="1"/>
</dbReference>
<dbReference type="Gene3D" id="3.50.30.10">
    <property type="entry name" value="Phosphohistidine domain"/>
    <property type="match status" value="1"/>
</dbReference>
<dbReference type="Gene3D" id="1.10.274.10">
    <property type="entry name" value="PtsI, HPr-binding domain"/>
    <property type="match status" value="1"/>
</dbReference>
<dbReference type="InterPro" id="IPR003018">
    <property type="entry name" value="GAF"/>
</dbReference>
<dbReference type="InterPro" id="IPR029016">
    <property type="entry name" value="GAF-like_dom_sf"/>
</dbReference>
<dbReference type="InterPro" id="IPR008279">
    <property type="entry name" value="PEP-util_enz_mobile_dom"/>
</dbReference>
<dbReference type="InterPro" id="IPR050499">
    <property type="entry name" value="PEP-utilizing_PTS_enzyme"/>
</dbReference>
<dbReference type="InterPro" id="IPR018274">
    <property type="entry name" value="PEP_util_AS"/>
</dbReference>
<dbReference type="InterPro" id="IPR000121">
    <property type="entry name" value="PEP_util_C"/>
</dbReference>
<dbReference type="InterPro" id="IPR023151">
    <property type="entry name" value="PEP_util_CS"/>
</dbReference>
<dbReference type="InterPro" id="IPR036637">
    <property type="entry name" value="Phosphohistidine_dom_sf"/>
</dbReference>
<dbReference type="InterPro" id="IPR006318">
    <property type="entry name" value="PTS_EI-like"/>
</dbReference>
<dbReference type="InterPro" id="IPR008731">
    <property type="entry name" value="PTS_EIN"/>
</dbReference>
<dbReference type="InterPro" id="IPR036618">
    <property type="entry name" value="PtsI_HPr-bd_sf"/>
</dbReference>
<dbReference type="InterPro" id="IPR015813">
    <property type="entry name" value="Pyrv/PenolPyrv_kinase-like_dom"/>
</dbReference>
<dbReference type="InterPro" id="IPR040442">
    <property type="entry name" value="Pyrv_kinase-like_dom_sf"/>
</dbReference>
<dbReference type="NCBIfam" id="NF008283">
    <property type="entry name" value="PRK11061.1"/>
    <property type="match status" value="1"/>
</dbReference>
<dbReference type="NCBIfam" id="TIGR01417">
    <property type="entry name" value="PTS_I_fam"/>
    <property type="match status" value="1"/>
</dbReference>
<dbReference type="PANTHER" id="PTHR46244:SF1">
    <property type="entry name" value="PHOSPHOENOLPYRUVATE-DEPENDENT PHOSPHOTRANSFERASE SYSTEM"/>
    <property type="match status" value="1"/>
</dbReference>
<dbReference type="PANTHER" id="PTHR46244">
    <property type="entry name" value="PHOSPHOENOLPYRUVATE-PROTEIN PHOSPHOTRANSFERASE"/>
    <property type="match status" value="1"/>
</dbReference>
<dbReference type="Pfam" id="PF01590">
    <property type="entry name" value="GAF"/>
    <property type="match status" value="1"/>
</dbReference>
<dbReference type="Pfam" id="PF05524">
    <property type="entry name" value="PEP-utilisers_N"/>
    <property type="match status" value="1"/>
</dbReference>
<dbReference type="Pfam" id="PF00391">
    <property type="entry name" value="PEP-utilizers"/>
    <property type="match status" value="1"/>
</dbReference>
<dbReference type="Pfam" id="PF02896">
    <property type="entry name" value="PEP-utilizers_C"/>
    <property type="match status" value="1"/>
</dbReference>
<dbReference type="PRINTS" id="PR01736">
    <property type="entry name" value="PHPHTRNFRASE"/>
</dbReference>
<dbReference type="SMART" id="SM00065">
    <property type="entry name" value="GAF"/>
    <property type="match status" value="1"/>
</dbReference>
<dbReference type="SUPFAM" id="SSF47831">
    <property type="entry name" value="Enzyme I of the PEP:sugar phosphotransferase system HPr-binding (sub)domain"/>
    <property type="match status" value="1"/>
</dbReference>
<dbReference type="SUPFAM" id="SSF55781">
    <property type="entry name" value="GAF domain-like"/>
    <property type="match status" value="1"/>
</dbReference>
<dbReference type="SUPFAM" id="SSF51621">
    <property type="entry name" value="Phosphoenolpyruvate/pyruvate domain"/>
    <property type="match status" value="1"/>
</dbReference>
<dbReference type="SUPFAM" id="SSF52009">
    <property type="entry name" value="Phosphohistidine domain"/>
    <property type="match status" value="1"/>
</dbReference>
<dbReference type="PROSITE" id="PS00742">
    <property type="entry name" value="PEP_ENZYMES_2"/>
    <property type="match status" value="1"/>
</dbReference>
<dbReference type="PROSITE" id="PS00370">
    <property type="entry name" value="PEP_ENZYMES_PHOS_SITE"/>
    <property type="match status" value="1"/>
</dbReference>
<evidence type="ECO:0000250" key="1">
    <source>
        <dbReference type="UniProtKB" id="P08839"/>
    </source>
</evidence>
<evidence type="ECO:0000250" key="2">
    <source>
        <dbReference type="UniProtKB" id="P23533"/>
    </source>
</evidence>
<evidence type="ECO:0000250" key="3">
    <source>
        <dbReference type="UniProtKB" id="P37177"/>
    </source>
</evidence>
<evidence type="ECO:0000305" key="4"/>
<comment type="function">
    <text evidence="3">Component of the phosphoenolpyruvate-dependent nitrogen-metabolic phosphotransferase system (nitrogen-metabolic PTS), that seems to be involved in regulating nitrogen metabolism. Enzyme I-Ntr transfers the phosphoryl group from phosphoenolpyruvate (PEP) to the phosphoryl carrier protein (NPr). Could function in the transcriptional regulation of sigma-54 dependent operons in conjunction with the NPr (PtsO) and EIIA-Ntr (PtsN) proteins. Enzyme I-Ntr is specific for NPr.</text>
</comment>
<comment type="catalytic activity">
    <reaction evidence="3">
        <text>L-histidyl-[protein] + phosphoenolpyruvate = N(pros)-phospho-L-histidyl-[protein] + pyruvate</text>
        <dbReference type="Rhea" id="RHEA:23880"/>
        <dbReference type="Rhea" id="RHEA-COMP:9745"/>
        <dbReference type="Rhea" id="RHEA-COMP:9746"/>
        <dbReference type="ChEBI" id="CHEBI:15361"/>
        <dbReference type="ChEBI" id="CHEBI:29979"/>
        <dbReference type="ChEBI" id="CHEBI:58702"/>
        <dbReference type="ChEBI" id="CHEBI:64837"/>
        <dbReference type="EC" id="2.7.3.9"/>
    </reaction>
</comment>
<comment type="cofactor">
    <cofactor evidence="3">
        <name>Mg(2+)</name>
        <dbReference type="ChEBI" id="CHEBI:18420"/>
    </cofactor>
</comment>
<comment type="subcellular location">
    <subcellularLocation>
        <location evidence="4">Cytoplasm</location>
    </subcellularLocation>
</comment>
<comment type="domain">
    <text evidence="1">The EI N-terminal domain contains the HPr binding site, the central domain the pyrophosphate/phosphate carrier histidine, and the C-terminal domain the pyruvate binding site.</text>
</comment>
<comment type="domain">
    <text evidence="3">The GAF domain is an important site of signal perception in prokaryotes and eukaryotes.</text>
</comment>
<comment type="miscellaneous">
    <text evidence="1">The reaction takes place in three steps, mediated by a phosphocarrier histidine residue located on the surface of the central domain. The two first partial reactions are catalyzed at an active site located on the N-terminal domain, and the third partial reaction is catalyzed at an active site located on the C-terminal domain. For catalytic turnover, the central domain swivels from the concave surface of the N-terminal domain to that of the C-terminal domain.</text>
</comment>
<comment type="similarity">
    <text evidence="4">Belongs to the PEP-utilizing enzyme family.</text>
</comment>
<gene>
    <name type="primary">ptsP</name>
    <name type="ordered locus">STM3003</name>
</gene>
<proteinExistence type="inferred from homology"/>
<sequence length="748" mass="83627">MLTRLREIVEKVASAPRLNEALNILVTDICLAMDTEVCSVYLADHDRRCYYLMATRGLKKPRGRTVALAFDEGIVGLVGRLAEPINLADAQKHPSFKYIPSVKEERFRAFLGVPIIQRRQLLGVLVVQQRELRQYDESEESFLVTLATQMAAILSQSQVTALFGQYRQTRIRALPAAPGVAIATGWQDATMPLMEQVYEASTLDTSLERERLTGALEEAANEFRRYSKRFAAGAQKETAAIFDLYSHLLSDARLRRELFAEVDKGAVAEWAVKKIIEKFAEQFAALTDNYLKERAGDLRTLGQRLLFHLDDSVQGPNAWPERFILVADELSATTLAELPQDRLAGVVVRDGAANSHAAIMVRALGIPTVMGADIQPSVLHRRTLVVDGYRGELLVDPEPVLIQEYQRLISEEIELSRLAEDDVNLPAQLKSGERVKVMLNAGLSPEHEEKLGSRIDGIGLYRTEIPFMLQSGFPSEEEQVAQYQGMLQMFNDKPVTLRTLDVGADKQLPYMPISEENPCLGWRGIRITLDQPEIFLIQVRAMLRANAATGNLSILLPMVTSIDEVDEARRLIERAGREVEEMIGYAIPKPRIGIMLEVPSMVFMLPHLANRIDFISVGTNDLTQYILAVDRNNTRVASIYDSLHPAMLRALSMIAQEAEKHGLDLRLCGEMAGDPMCVAILIGLGYRHLSMNGRSVARVKYLLRHIDFEDAQTLARRSLEAQMATEVRHQVAAFMERRGMGGLIRGGL</sequence>
<accession>P37178</accession>
<organism>
    <name type="scientific">Salmonella typhimurium (strain LT2 / SGSC1412 / ATCC 700720)</name>
    <dbReference type="NCBI Taxonomy" id="99287"/>
    <lineage>
        <taxon>Bacteria</taxon>
        <taxon>Pseudomonadati</taxon>
        <taxon>Pseudomonadota</taxon>
        <taxon>Gammaproteobacteria</taxon>
        <taxon>Enterobacterales</taxon>
        <taxon>Enterobacteriaceae</taxon>
        <taxon>Salmonella</taxon>
    </lineage>
</organism>
<feature type="chain" id="PRO_0000147096" description="Phosphoenolpyruvate-dependent phosphotransferase system">
    <location>
        <begin position="1"/>
        <end position="748"/>
    </location>
</feature>
<feature type="domain" description="GAF" evidence="3">
    <location>
        <begin position="1"/>
        <end position="127"/>
    </location>
</feature>
<feature type="region of interest" description="Linker" evidence="3">
    <location>
        <begin position="128"/>
        <end position="170"/>
    </location>
</feature>
<feature type="region of interest" description="PTS EI" evidence="3">
    <location>
        <begin position="171"/>
        <end position="748"/>
    </location>
</feature>
<feature type="active site" description="Tele-phosphohistidine intermediate" evidence="1">
    <location>
        <position position="356"/>
    </location>
</feature>
<feature type="active site" description="Proton donor" evidence="1">
    <location>
        <position position="668"/>
    </location>
</feature>
<feature type="binding site" evidence="2">
    <location>
        <position position="462"/>
    </location>
    <ligand>
        <name>phosphoenolpyruvate</name>
        <dbReference type="ChEBI" id="CHEBI:58702"/>
    </ligand>
</feature>
<feature type="binding site" evidence="1">
    <location>
        <position position="498"/>
    </location>
    <ligand>
        <name>phosphoenolpyruvate</name>
        <dbReference type="ChEBI" id="CHEBI:58702"/>
    </ligand>
</feature>
<feature type="binding site" evidence="1">
    <location>
        <position position="597"/>
    </location>
    <ligand>
        <name>Mg(2+)</name>
        <dbReference type="ChEBI" id="CHEBI:18420"/>
    </ligand>
</feature>
<feature type="binding site" evidence="1">
    <location>
        <begin position="620"/>
        <end position="621"/>
    </location>
    <ligand>
        <name>phosphoenolpyruvate</name>
        <dbReference type="ChEBI" id="CHEBI:58702"/>
    </ligand>
</feature>
<feature type="binding site" evidence="1">
    <location>
        <position position="621"/>
    </location>
    <ligand>
        <name>Mg(2+)</name>
        <dbReference type="ChEBI" id="CHEBI:18420"/>
    </ligand>
</feature>
<feature type="binding site" evidence="2">
    <location>
        <position position="631"/>
    </location>
    <ligand>
        <name>phosphoenolpyruvate</name>
        <dbReference type="ChEBI" id="CHEBI:58702"/>
    </ligand>
</feature>
<protein>
    <recommendedName>
        <fullName evidence="3">Phosphoenolpyruvate-dependent phosphotransferase system</fullName>
        <ecNumber evidence="3">2.7.3.9</ecNumber>
    </recommendedName>
    <alternativeName>
        <fullName evidence="3">Enzyme I-Ntr</fullName>
        <shortName evidence="3">EINtr</shortName>
    </alternativeName>
    <alternativeName>
        <fullName>Phosphotransferase system, enzyme I</fullName>
    </alternativeName>
</protein>
<keyword id="KW-0963">Cytoplasm</keyword>
<keyword id="KW-0418">Kinase</keyword>
<keyword id="KW-0460">Magnesium</keyword>
<keyword id="KW-0479">Metal-binding</keyword>
<keyword id="KW-0598">Phosphotransferase system</keyword>
<keyword id="KW-1185">Reference proteome</keyword>
<keyword id="KW-0762">Sugar transport</keyword>
<keyword id="KW-0808">Transferase</keyword>
<keyword id="KW-0813">Transport</keyword>
<name>PT1P_SALTY</name>
<reference key="1">
    <citation type="journal article" date="2001" name="Nature">
        <title>Complete genome sequence of Salmonella enterica serovar Typhimurium LT2.</title>
        <authorList>
            <person name="McClelland M."/>
            <person name="Sanderson K.E."/>
            <person name="Spieth J."/>
            <person name="Clifton S.W."/>
            <person name="Latreille P."/>
            <person name="Courtney L."/>
            <person name="Porwollik S."/>
            <person name="Ali J."/>
            <person name="Dante M."/>
            <person name="Du F."/>
            <person name="Hou S."/>
            <person name="Layman D."/>
            <person name="Leonard S."/>
            <person name="Nguyen C."/>
            <person name="Scott K."/>
            <person name="Holmes A."/>
            <person name="Grewal N."/>
            <person name="Mulvaney E."/>
            <person name="Ryan E."/>
            <person name="Sun H."/>
            <person name="Florea L."/>
            <person name="Miller W."/>
            <person name="Stoneking T."/>
            <person name="Nhan M."/>
            <person name="Waterston R."/>
            <person name="Wilson R.K."/>
        </authorList>
    </citation>
    <scope>NUCLEOTIDE SEQUENCE [LARGE SCALE GENOMIC DNA]</scope>
    <source>
        <strain>LT2 / SGSC1412 / ATCC 700720</strain>
    </source>
</reference>
<reference key="2">
    <citation type="journal article" date="1993" name="J. Biol. Chem.">
        <title>Isolation and characterization of a temperature-sensitive mutant of Salmonella typhimurium defective in prolipoprotein modification.</title>
        <authorList>
            <person name="Gan K."/>
            <person name="Gupta S.D."/>
            <person name="Sankaran K."/>
            <person name="Schmid M.B."/>
            <person name="Wu H.C."/>
        </authorList>
    </citation>
    <scope>NUCLEOTIDE SEQUENCE [GENOMIC DNA] OF 664-748</scope>
    <source>
        <strain>LT2</strain>
    </source>
</reference>